<sequence>MMGILDELRGLSAAEDFFRTLGVKYDAEVLNVARLHILRRMGTYLSQAELEPDEDAARAQCRAQLQRAYDDFTRSTPIAERVFKVHRDAVRPSGGFVSLSELTQDGT</sequence>
<name>NIFW_GLUDA</name>
<evidence type="ECO:0000250" key="1"/>
<evidence type="ECO:0000305" key="2"/>
<protein>
    <recommendedName>
        <fullName>Nitrogenase-stabilizing/protective protein NifW</fullName>
    </recommendedName>
</protein>
<comment type="function">
    <text evidence="1">May protect the nitrogenase Fe-Mo protein from oxidative damage.</text>
</comment>
<comment type="subunit">
    <text evidence="1">Homotrimer; associates with NifD.</text>
</comment>
<comment type="similarity">
    <text evidence="2">Belongs to the NifW family.</text>
</comment>
<dbReference type="EMBL" id="AF030414">
    <property type="protein sequence ID" value="AAG27076.1"/>
    <property type="molecule type" value="Genomic_DNA"/>
</dbReference>
<dbReference type="EMBL" id="AM889285">
    <property type="protein sequence ID" value="CAP54393.1"/>
    <property type="molecule type" value="Genomic_DNA"/>
</dbReference>
<dbReference type="EMBL" id="CP001189">
    <property type="protein sequence ID" value="ACI51335.1"/>
    <property type="molecule type" value="Genomic_DNA"/>
</dbReference>
<dbReference type="RefSeq" id="WP_012222847.1">
    <property type="nucleotide sequence ID" value="NC_010125.1"/>
</dbReference>
<dbReference type="STRING" id="272568.GDI0450"/>
<dbReference type="KEGG" id="gdi:GDI0450"/>
<dbReference type="KEGG" id="gdj:Gdia_1556"/>
<dbReference type="eggNOG" id="ENOG50330W8">
    <property type="taxonomic scope" value="Bacteria"/>
</dbReference>
<dbReference type="HOGENOM" id="CLU_145318_0_0_5"/>
<dbReference type="OrthoDB" id="9811868at2"/>
<dbReference type="Proteomes" id="UP000001176">
    <property type="component" value="Chromosome"/>
</dbReference>
<dbReference type="GO" id="GO:0009399">
    <property type="term" value="P:nitrogen fixation"/>
    <property type="evidence" value="ECO:0007669"/>
    <property type="project" value="UniProtKB-UniRule"/>
</dbReference>
<dbReference type="HAMAP" id="MF_00529">
    <property type="entry name" value="NifW"/>
    <property type="match status" value="1"/>
</dbReference>
<dbReference type="InterPro" id="IPR004893">
    <property type="entry name" value="NifW"/>
</dbReference>
<dbReference type="NCBIfam" id="NF002009">
    <property type="entry name" value="PRK00810.1"/>
    <property type="match status" value="1"/>
</dbReference>
<dbReference type="Pfam" id="PF03206">
    <property type="entry name" value="NifW"/>
    <property type="match status" value="1"/>
</dbReference>
<dbReference type="PIRSF" id="PIRSF005790">
    <property type="entry name" value="NifW"/>
    <property type="match status" value="1"/>
</dbReference>
<reference key="1">
    <citation type="journal article" date="2000" name="J. Bacteriol.">
        <title>Characterization of a major cluster of nif, fix, and associated genes in a sugarcane endophyte, Acetobacter diazotrophicus.</title>
        <authorList>
            <person name="Lee S."/>
            <person name="Reth A."/>
            <person name="Meletzus D."/>
            <person name="Sevilla M."/>
            <person name="Kennedy C."/>
        </authorList>
    </citation>
    <scope>NUCLEOTIDE SEQUENCE [GENOMIC DNA]</scope>
</reference>
<reference key="2">
    <citation type="journal article" date="2009" name="BMC Genomics">
        <title>Complete genome sequence of the sugarcane nitrogen-fixing endophyte Gluconacetobacter diazotrophicus Pal5.</title>
        <authorList>
            <person name="Bertalan M."/>
            <person name="Albano R."/>
            <person name="de Padua V."/>
            <person name="Rouws L."/>
            <person name="Rojas C."/>
            <person name="Hemerly A."/>
            <person name="Teixeira K."/>
            <person name="Schwab S."/>
            <person name="Araujo J."/>
            <person name="Oliveira A."/>
            <person name="Franca L."/>
            <person name="Magalhaes V."/>
            <person name="Alqueres S."/>
            <person name="Cardoso A."/>
            <person name="Almeida W."/>
            <person name="Loureiro M.M."/>
            <person name="Nogueira E."/>
            <person name="Cidade D."/>
            <person name="Oliveira D."/>
            <person name="Simao T."/>
            <person name="Macedo J."/>
            <person name="Valadao A."/>
            <person name="Dreschsel M."/>
            <person name="Freitas F."/>
            <person name="Vidal M."/>
            <person name="Guedes H."/>
            <person name="Rodrigues E."/>
            <person name="Meneses C."/>
            <person name="Brioso P."/>
            <person name="Pozzer L."/>
            <person name="Figueiredo D."/>
            <person name="Montano H."/>
            <person name="Junior J."/>
            <person name="de Souza Filho G."/>
            <person name="Martin Quintana Flores V."/>
            <person name="Ferreira B."/>
            <person name="Branco A."/>
            <person name="Gonzalez P."/>
            <person name="Guillobel H."/>
            <person name="Lemos M."/>
            <person name="Seibel L."/>
            <person name="Macedo J."/>
            <person name="Alves-Ferreira M."/>
            <person name="Sachetto-Martins G."/>
            <person name="Coelho A."/>
            <person name="Santos E."/>
            <person name="Amaral G."/>
            <person name="Neves A."/>
            <person name="Pacheco A.B."/>
            <person name="Carvalho D."/>
            <person name="Lery L."/>
            <person name="Bisch P."/>
            <person name="Rossle S.C."/>
            <person name="Urmenyi T."/>
            <person name="Rael Pereira A."/>
            <person name="Silva R."/>
            <person name="Rondinelli E."/>
            <person name="von Kruger W."/>
            <person name="Martins O."/>
            <person name="Baldani J.I."/>
            <person name="Ferreira P.C."/>
        </authorList>
    </citation>
    <scope>NUCLEOTIDE SEQUENCE [LARGE SCALE GENOMIC DNA]</scope>
    <source>
        <strain>ATCC 49037 / DSM 5601 / CCUG 37298 / CIP 103539 / LMG 7603 / PAl5</strain>
    </source>
</reference>
<reference key="3">
    <citation type="journal article" date="2010" name="Stand. Genomic Sci.">
        <title>Two genome sequences of the same bacterial strain, Gluconacetobacter diazotrophicus PAl 5, suggest a new standard in genome sequence submission.</title>
        <authorList>
            <person name="Giongo A."/>
            <person name="Tyler H.L."/>
            <person name="Zipperer U.N."/>
            <person name="Triplett E.W."/>
        </authorList>
    </citation>
    <scope>NUCLEOTIDE SEQUENCE [LARGE SCALE GENOMIC DNA]</scope>
    <source>
        <strain>ATCC 49037 / DSM 5601 / CCUG 37298 / CIP 103539 / LMG 7603 / PAl5</strain>
    </source>
</reference>
<proteinExistence type="inferred from homology"/>
<organism>
    <name type="scientific">Gluconacetobacter diazotrophicus (strain ATCC 49037 / DSM 5601 / CCUG 37298 / CIP 103539 / LMG 7603 / PAl5)</name>
    <dbReference type="NCBI Taxonomy" id="272568"/>
    <lineage>
        <taxon>Bacteria</taxon>
        <taxon>Pseudomonadati</taxon>
        <taxon>Pseudomonadota</taxon>
        <taxon>Alphaproteobacteria</taxon>
        <taxon>Acetobacterales</taxon>
        <taxon>Acetobacteraceae</taxon>
        <taxon>Gluconacetobacter</taxon>
    </lineage>
</organism>
<accession>Q9FA11</accession>
<accession>A9H5Z4</accession>
<accession>B5ZJD5</accession>
<keyword id="KW-0535">Nitrogen fixation</keyword>
<keyword id="KW-1185">Reference proteome</keyword>
<gene>
    <name type="primary">nifW</name>
    <name type="ordered locus">GDI0450</name>
    <name type="ordered locus">Gdia_1556</name>
</gene>
<feature type="chain" id="PRO_0000219522" description="Nitrogenase-stabilizing/protective protein NifW">
    <location>
        <begin position="1"/>
        <end position="107"/>
    </location>
</feature>